<name>AIM24_EMENI</name>
<accession>C8V7C7</accession>
<accession>Q5B6V7</accession>
<organism>
    <name type="scientific">Emericella nidulans (strain FGSC A4 / ATCC 38163 / CBS 112.46 / NRRL 194 / M139)</name>
    <name type="common">Aspergillus nidulans</name>
    <dbReference type="NCBI Taxonomy" id="227321"/>
    <lineage>
        <taxon>Eukaryota</taxon>
        <taxon>Fungi</taxon>
        <taxon>Dikarya</taxon>
        <taxon>Ascomycota</taxon>
        <taxon>Pezizomycotina</taxon>
        <taxon>Eurotiomycetes</taxon>
        <taxon>Eurotiomycetidae</taxon>
        <taxon>Eurotiales</taxon>
        <taxon>Aspergillaceae</taxon>
        <taxon>Aspergillus</taxon>
        <taxon>Aspergillus subgen. Nidulantes</taxon>
    </lineage>
</organism>
<feature type="transit peptide" description="Mitochondrion" evidence="2">
    <location>
        <begin position="1"/>
        <end position="36"/>
    </location>
</feature>
<feature type="chain" id="PRO_0000399578" description="Altered inheritance of mitochondria protein 24, mitochondrial">
    <location>
        <begin position="37"/>
        <end position="402"/>
    </location>
</feature>
<feature type="region of interest" description="Disordered" evidence="3">
    <location>
        <begin position="344"/>
        <end position="372"/>
    </location>
</feature>
<feature type="compositionally biased region" description="Basic and acidic residues" evidence="3">
    <location>
        <begin position="346"/>
        <end position="372"/>
    </location>
</feature>
<sequence>MVQPLRRGVRPLTWTRVLPRQTRQPASSHRRAQARYVQIRATPTDQPATVNGSNVPIVDTPSSAESADARFEVIGAPYSLLSVTLSASQNLYTRRGTLVGLSGKADNVISTLSVLEPFRRAPVGVPFLYQKISSASPVTALISTRSPVTSFAVVHLNGSVDWMVAQRRALLAWTGRSLSIRPTINTSLSVAHWGSSEVTGRGLLALVGSGQLYSVELKEGEKYIVHPSNVVAYTVSSKPPRPYRFKSTSLKLQVPGLKSLPTFLQNTQFIKAMSETDSWKTAMRIFHTVRTWSRMTIWGDRLFLQFDGPSTILLQSRGARMSDVLSTQEVNEFASTPRGLTIVPTKQEEKQKGSEQDGKDDVHKAPGTRSVDEIEQEIKGVTQSIAVLTKEGKVVFQKPGQQ</sequence>
<keyword id="KW-0496">Mitochondrion</keyword>
<keyword id="KW-1185">Reference proteome</keyword>
<keyword id="KW-0809">Transit peptide</keyword>
<reference key="1">
    <citation type="journal article" date="2005" name="Nature">
        <title>Sequencing of Aspergillus nidulans and comparative analysis with A. fumigatus and A. oryzae.</title>
        <authorList>
            <person name="Galagan J.E."/>
            <person name="Calvo S.E."/>
            <person name="Cuomo C."/>
            <person name="Ma L.-J."/>
            <person name="Wortman J.R."/>
            <person name="Batzoglou S."/>
            <person name="Lee S.-I."/>
            <person name="Bastuerkmen M."/>
            <person name="Spevak C.C."/>
            <person name="Clutterbuck J."/>
            <person name="Kapitonov V."/>
            <person name="Jurka J."/>
            <person name="Scazzocchio C."/>
            <person name="Farman M.L."/>
            <person name="Butler J."/>
            <person name="Purcell S."/>
            <person name="Harris S."/>
            <person name="Braus G.H."/>
            <person name="Draht O."/>
            <person name="Busch S."/>
            <person name="D'Enfert C."/>
            <person name="Bouchier C."/>
            <person name="Goldman G.H."/>
            <person name="Bell-Pedersen D."/>
            <person name="Griffiths-Jones S."/>
            <person name="Doonan J.H."/>
            <person name="Yu J."/>
            <person name="Vienken K."/>
            <person name="Pain A."/>
            <person name="Freitag M."/>
            <person name="Selker E.U."/>
            <person name="Archer D.B."/>
            <person name="Penalva M.A."/>
            <person name="Oakley B.R."/>
            <person name="Momany M."/>
            <person name="Tanaka T."/>
            <person name="Kumagai T."/>
            <person name="Asai K."/>
            <person name="Machida M."/>
            <person name="Nierman W.C."/>
            <person name="Denning D.W."/>
            <person name="Caddick M.X."/>
            <person name="Hynes M."/>
            <person name="Paoletti M."/>
            <person name="Fischer R."/>
            <person name="Miller B.L."/>
            <person name="Dyer P.S."/>
            <person name="Sachs M.S."/>
            <person name="Osmani S.A."/>
            <person name="Birren B.W."/>
        </authorList>
    </citation>
    <scope>NUCLEOTIDE SEQUENCE [LARGE SCALE GENOMIC DNA]</scope>
    <source>
        <strain>FGSC A4 / ATCC 38163 / CBS 112.46 / NRRL 194 / M139</strain>
    </source>
</reference>
<reference key="2">
    <citation type="journal article" date="2009" name="Fungal Genet. Biol.">
        <title>The 2008 update of the Aspergillus nidulans genome annotation: a community effort.</title>
        <authorList>
            <person name="Wortman J.R."/>
            <person name="Gilsenan J.M."/>
            <person name="Joardar V."/>
            <person name="Deegan J."/>
            <person name="Clutterbuck J."/>
            <person name="Andersen M.R."/>
            <person name="Archer D."/>
            <person name="Bencina M."/>
            <person name="Braus G."/>
            <person name="Coutinho P."/>
            <person name="von Dohren H."/>
            <person name="Doonan J."/>
            <person name="Driessen A.J."/>
            <person name="Durek P."/>
            <person name="Espeso E."/>
            <person name="Fekete E."/>
            <person name="Flipphi M."/>
            <person name="Estrada C.G."/>
            <person name="Geysens S."/>
            <person name="Goldman G."/>
            <person name="de Groot P.W."/>
            <person name="Hansen K."/>
            <person name="Harris S.D."/>
            <person name="Heinekamp T."/>
            <person name="Helmstaedt K."/>
            <person name="Henrissat B."/>
            <person name="Hofmann G."/>
            <person name="Homan T."/>
            <person name="Horio T."/>
            <person name="Horiuchi H."/>
            <person name="James S."/>
            <person name="Jones M."/>
            <person name="Karaffa L."/>
            <person name="Karanyi Z."/>
            <person name="Kato M."/>
            <person name="Keller N."/>
            <person name="Kelly D.E."/>
            <person name="Kiel J.A."/>
            <person name="Kim J.M."/>
            <person name="van der Klei I.J."/>
            <person name="Klis F.M."/>
            <person name="Kovalchuk A."/>
            <person name="Krasevec N."/>
            <person name="Kubicek C.P."/>
            <person name="Liu B."/>
            <person name="Maccabe A."/>
            <person name="Meyer V."/>
            <person name="Mirabito P."/>
            <person name="Miskei M."/>
            <person name="Mos M."/>
            <person name="Mullins J."/>
            <person name="Nelson D.R."/>
            <person name="Nielsen J."/>
            <person name="Oakley B.R."/>
            <person name="Osmani S.A."/>
            <person name="Pakula T."/>
            <person name="Paszewski A."/>
            <person name="Paulsen I."/>
            <person name="Pilsyk S."/>
            <person name="Pocsi I."/>
            <person name="Punt P.J."/>
            <person name="Ram A.F."/>
            <person name="Ren Q."/>
            <person name="Robellet X."/>
            <person name="Robson G."/>
            <person name="Seiboth B."/>
            <person name="van Solingen P."/>
            <person name="Specht T."/>
            <person name="Sun J."/>
            <person name="Taheri-Talesh N."/>
            <person name="Takeshita N."/>
            <person name="Ussery D."/>
            <person name="vanKuyk P.A."/>
            <person name="Visser H."/>
            <person name="van de Vondervoort P.J."/>
            <person name="de Vries R.P."/>
            <person name="Walton J."/>
            <person name="Xiang X."/>
            <person name="Xiong Y."/>
            <person name="Zeng A.P."/>
            <person name="Brandt B.W."/>
            <person name="Cornell M.J."/>
            <person name="van den Hondel C.A."/>
            <person name="Visser J."/>
            <person name="Oliver S.G."/>
            <person name="Turner G."/>
        </authorList>
    </citation>
    <scope>GENOME REANNOTATION</scope>
    <source>
        <strain>FGSC A4 / ATCC 38163 / CBS 112.46 / NRRL 194 / M139</strain>
    </source>
</reference>
<evidence type="ECO:0000250" key="1"/>
<evidence type="ECO:0000255" key="2"/>
<evidence type="ECO:0000256" key="3">
    <source>
        <dbReference type="SAM" id="MobiDB-lite"/>
    </source>
</evidence>
<evidence type="ECO:0000305" key="4"/>
<proteinExistence type="inferred from homology"/>
<comment type="subcellular location">
    <subcellularLocation>
        <location evidence="1">Mitochondrion</location>
    </subcellularLocation>
</comment>
<comment type="similarity">
    <text evidence="4">Belongs to the AIM24 family.</text>
</comment>
<comment type="sequence caution" evidence="4">
    <conflict type="erroneous gene model prediction">
        <sequence resource="EMBL-CDS" id="EAA59931"/>
    </conflict>
    <text>The predicted gene AN3723 has been split into 2 genes: AN10466 and AN10441.</text>
</comment>
<protein>
    <recommendedName>
        <fullName>Altered inheritance of mitochondria protein 24, mitochondrial</fullName>
    </recommendedName>
</protein>
<dbReference type="EMBL" id="AACD01000061">
    <property type="protein sequence ID" value="EAA59931.1"/>
    <property type="status" value="ALT_SEQ"/>
    <property type="molecule type" value="Genomic_DNA"/>
</dbReference>
<dbReference type="EMBL" id="BN001302">
    <property type="protein sequence ID" value="CBF75529.1"/>
    <property type="molecule type" value="Genomic_DNA"/>
</dbReference>
<dbReference type="FunCoup" id="C8V7C7">
    <property type="interactions" value="14"/>
</dbReference>
<dbReference type="EnsemblFungi" id="CBF75529">
    <property type="protein sequence ID" value="CBF75529"/>
    <property type="gene ID" value="ANIA_10466"/>
</dbReference>
<dbReference type="VEuPathDB" id="FungiDB:AN10466"/>
<dbReference type="eggNOG" id="ENOG502RXC5">
    <property type="taxonomic scope" value="Eukaryota"/>
</dbReference>
<dbReference type="HOGENOM" id="CLU_278982_0_0_1"/>
<dbReference type="InParanoid" id="C8V7C7"/>
<dbReference type="OMA" id="QTRCVQI"/>
<dbReference type="OrthoDB" id="5295771at2759"/>
<dbReference type="Proteomes" id="UP000000560">
    <property type="component" value="Chromosome II"/>
</dbReference>
<dbReference type="GO" id="GO:0005743">
    <property type="term" value="C:mitochondrial inner membrane"/>
    <property type="evidence" value="ECO:0000318"/>
    <property type="project" value="GO_Central"/>
</dbReference>
<dbReference type="GO" id="GO:0007007">
    <property type="term" value="P:inner mitochondrial membrane organization"/>
    <property type="evidence" value="ECO:0000318"/>
    <property type="project" value="GO_Central"/>
</dbReference>
<dbReference type="FunFam" id="3.60.160.10:FF:000001">
    <property type="entry name" value="Altered inheritance of mitochondria protein 24, mitochondrial"/>
    <property type="match status" value="1"/>
</dbReference>
<dbReference type="Gene3D" id="3.60.160.10">
    <property type="entry name" value="Mitochondrial biogenesis AIM24"/>
    <property type="match status" value="1"/>
</dbReference>
<dbReference type="InterPro" id="IPR002838">
    <property type="entry name" value="AIM24"/>
</dbReference>
<dbReference type="InterPro" id="IPR036983">
    <property type="entry name" value="AIM24_sf"/>
</dbReference>
<dbReference type="InterPro" id="IPR016031">
    <property type="entry name" value="Trp_RNA-bd_attenuator-like_dom"/>
</dbReference>
<dbReference type="PANTHER" id="PTHR36959">
    <property type="entry name" value="ALTERED INHERITANCE OF MITOCHONDRIA PROTEIN 24, MITOCHONDRIAL"/>
    <property type="match status" value="1"/>
</dbReference>
<dbReference type="PANTHER" id="PTHR36959:SF2">
    <property type="entry name" value="ALTERED INHERITANCE OF MITOCHONDRIA PROTEIN 24, MITOCHONDRIAL"/>
    <property type="match status" value="1"/>
</dbReference>
<dbReference type="Pfam" id="PF01987">
    <property type="entry name" value="AIM24"/>
    <property type="match status" value="1"/>
</dbReference>
<dbReference type="SUPFAM" id="SSF51219">
    <property type="entry name" value="TRAP-like"/>
    <property type="match status" value="1"/>
</dbReference>
<gene>
    <name type="primary">aim24</name>
    <name type="ORF">AN10466</name>
</gene>